<evidence type="ECO:0000256" key="1">
    <source>
        <dbReference type="SAM" id="MobiDB-lite"/>
    </source>
</evidence>
<gene>
    <name type="ORF">SPAC6C3.02c</name>
</gene>
<keyword id="KW-1185">Reference proteome</keyword>
<dbReference type="EMBL" id="CU329670">
    <property type="protein sequence ID" value="CAA93615.1"/>
    <property type="molecule type" value="Genomic_DNA"/>
</dbReference>
<dbReference type="PIR" id="T39026">
    <property type="entry name" value="T39026"/>
</dbReference>
<dbReference type="SMR" id="Q10307"/>
<dbReference type="BioGRID" id="279717">
    <property type="interactions" value="7"/>
</dbReference>
<dbReference type="FunCoup" id="Q10307">
    <property type="interactions" value="482"/>
</dbReference>
<dbReference type="STRING" id="284812.Q10307"/>
<dbReference type="PaxDb" id="4896-SPAC6C3.02c.1"/>
<dbReference type="EnsemblFungi" id="SPAC6C3.02c.1">
    <property type="protein sequence ID" value="SPAC6C3.02c.1:pep"/>
    <property type="gene ID" value="SPAC6C3.02c"/>
</dbReference>
<dbReference type="KEGG" id="spo:2543292"/>
<dbReference type="PomBase" id="SPAC6C3.02c"/>
<dbReference type="VEuPathDB" id="FungiDB:SPAC6C3.02c"/>
<dbReference type="eggNOG" id="KOG4090">
    <property type="taxonomic scope" value="Eukaryota"/>
</dbReference>
<dbReference type="HOGENOM" id="CLU_093520_0_1_1"/>
<dbReference type="InParanoid" id="Q10307"/>
<dbReference type="OMA" id="CDADARN"/>
<dbReference type="PhylomeDB" id="Q10307"/>
<dbReference type="PRO" id="PR:Q10307"/>
<dbReference type="Proteomes" id="UP000002485">
    <property type="component" value="Chromosome I"/>
</dbReference>
<dbReference type="GO" id="GO:0005829">
    <property type="term" value="C:cytosol"/>
    <property type="evidence" value="ECO:0007005"/>
    <property type="project" value="PomBase"/>
</dbReference>
<dbReference type="GO" id="GO:0005758">
    <property type="term" value="C:mitochondrial intermembrane space"/>
    <property type="evidence" value="ECO:0000266"/>
    <property type="project" value="PomBase"/>
</dbReference>
<dbReference type="GO" id="GO:0005739">
    <property type="term" value="C:mitochondrion"/>
    <property type="evidence" value="ECO:0000318"/>
    <property type="project" value="GO_Central"/>
</dbReference>
<dbReference type="GO" id="GO:0005634">
    <property type="term" value="C:nucleus"/>
    <property type="evidence" value="ECO:0007005"/>
    <property type="project" value="PomBase"/>
</dbReference>
<dbReference type="GO" id="GO:0007005">
    <property type="term" value="P:mitochondrion organization"/>
    <property type="evidence" value="ECO:0000318"/>
    <property type="project" value="GO_Central"/>
</dbReference>
<dbReference type="InterPro" id="IPR055304">
    <property type="entry name" value="CHCHD2/10-like"/>
</dbReference>
<dbReference type="InterPro" id="IPR009069">
    <property type="entry name" value="Cys_alpha_HP_mot_SF"/>
</dbReference>
<dbReference type="PANTHER" id="PTHR13523:SF2">
    <property type="entry name" value="COILED-COIL-HELIX-COILED-COIL-HELIX DOMAIN CONTAINING 2, ISOFORM A-RELATED"/>
    <property type="match status" value="1"/>
</dbReference>
<dbReference type="PANTHER" id="PTHR13523">
    <property type="entry name" value="COILED-COIL-HELIX-COILED-COIL-HELIX DOMAIN CONTAINING 2/NUR77"/>
    <property type="match status" value="1"/>
</dbReference>
<dbReference type="SUPFAM" id="SSF47072">
    <property type="entry name" value="Cysteine alpha-hairpin motif"/>
    <property type="match status" value="1"/>
</dbReference>
<name>YD52_SCHPO</name>
<sequence>MPRRRSAAPPPRRAAPARSASTAAALPPRTMAPPPAPSRVQQAPPPTAVQGGSSPGFFGNLVSTAAGVGIGSAIGHTVGSVITGGFSGSGSNNAPADTSVPQSSYSNSVPEAAYGSAPPSTFASSAISEEAKNACKGDAKMFADCINEHEFSQCSYYLEQLKACQAMWSNQQ</sequence>
<protein>
    <recommendedName>
        <fullName>Uncharacterized protein C6C3.02c</fullName>
    </recommendedName>
</protein>
<organism>
    <name type="scientific">Schizosaccharomyces pombe (strain 972 / ATCC 24843)</name>
    <name type="common">Fission yeast</name>
    <dbReference type="NCBI Taxonomy" id="284812"/>
    <lineage>
        <taxon>Eukaryota</taxon>
        <taxon>Fungi</taxon>
        <taxon>Dikarya</taxon>
        <taxon>Ascomycota</taxon>
        <taxon>Taphrinomycotina</taxon>
        <taxon>Schizosaccharomycetes</taxon>
        <taxon>Schizosaccharomycetales</taxon>
        <taxon>Schizosaccharomycetaceae</taxon>
        <taxon>Schizosaccharomyces</taxon>
    </lineage>
</organism>
<accession>Q10307</accession>
<feature type="chain" id="PRO_0000116584" description="Uncharacterized protein C6C3.02c">
    <location>
        <begin position="1"/>
        <end position="172"/>
    </location>
</feature>
<feature type="region of interest" description="Disordered" evidence="1">
    <location>
        <begin position="1"/>
        <end position="54"/>
    </location>
</feature>
<feature type="region of interest" description="Disordered" evidence="1">
    <location>
        <begin position="82"/>
        <end position="111"/>
    </location>
</feature>
<feature type="compositionally biased region" description="Low complexity" evidence="1">
    <location>
        <begin position="14"/>
        <end position="29"/>
    </location>
</feature>
<feature type="compositionally biased region" description="Pro residues" evidence="1">
    <location>
        <begin position="30"/>
        <end position="47"/>
    </location>
</feature>
<feature type="compositionally biased region" description="Polar residues" evidence="1">
    <location>
        <begin position="89"/>
        <end position="109"/>
    </location>
</feature>
<reference key="1">
    <citation type="journal article" date="2002" name="Nature">
        <title>The genome sequence of Schizosaccharomyces pombe.</title>
        <authorList>
            <person name="Wood V."/>
            <person name="Gwilliam R."/>
            <person name="Rajandream M.A."/>
            <person name="Lyne M.H."/>
            <person name="Lyne R."/>
            <person name="Stewart A."/>
            <person name="Sgouros J.G."/>
            <person name="Peat N."/>
            <person name="Hayles J."/>
            <person name="Baker S.G."/>
            <person name="Basham D."/>
            <person name="Bowman S."/>
            <person name="Brooks K."/>
            <person name="Brown D."/>
            <person name="Brown S."/>
            <person name="Chillingworth T."/>
            <person name="Churcher C.M."/>
            <person name="Collins M."/>
            <person name="Connor R."/>
            <person name="Cronin A."/>
            <person name="Davis P."/>
            <person name="Feltwell T."/>
            <person name="Fraser A."/>
            <person name="Gentles S."/>
            <person name="Goble A."/>
            <person name="Hamlin N."/>
            <person name="Harris D.E."/>
            <person name="Hidalgo J."/>
            <person name="Hodgson G."/>
            <person name="Holroyd S."/>
            <person name="Hornsby T."/>
            <person name="Howarth S."/>
            <person name="Huckle E.J."/>
            <person name="Hunt S."/>
            <person name="Jagels K."/>
            <person name="James K.D."/>
            <person name="Jones L."/>
            <person name="Jones M."/>
            <person name="Leather S."/>
            <person name="McDonald S."/>
            <person name="McLean J."/>
            <person name="Mooney P."/>
            <person name="Moule S."/>
            <person name="Mungall K.L."/>
            <person name="Murphy L.D."/>
            <person name="Niblett D."/>
            <person name="Odell C."/>
            <person name="Oliver K."/>
            <person name="O'Neil S."/>
            <person name="Pearson D."/>
            <person name="Quail M.A."/>
            <person name="Rabbinowitsch E."/>
            <person name="Rutherford K.M."/>
            <person name="Rutter S."/>
            <person name="Saunders D."/>
            <person name="Seeger K."/>
            <person name="Sharp S."/>
            <person name="Skelton J."/>
            <person name="Simmonds M.N."/>
            <person name="Squares R."/>
            <person name="Squares S."/>
            <person name="Stevens K."/>
            <person name="Taylor K."/>
            <person name="Taylor R.G."/>
            <person name="Tivey A."/>
            <person name="Walsh S.V."/>
            <person name="Warren T."/>
            <person name="Whitehead S."/>
            <person name="Woodward J.R."/>
            <person name="Volckaert G."/>
            <person name="Aert R."/>
            <person name="Robben J."/>
            <person name="Grymonprez B."/>
            <person name="Weltjens I."/>
            <person name="Vanstreels E."/>
            <person name="Rieger M."/>
            <person name="Schaefer M."/>
            <person name="Mueller-Auer S."/>
            <person name="Gabel C."/>
            <person name="Fuchs M."/>
            <person name="Duesterhoeft A."/>
            <person name="Fritzc C."/>
            <person name="Holzer E."/>
            <person name="Moestl D."/>
            <person name="Hilbert H."/>
            <person name="Borzym K."/>
            <person name="Langer I."/>
            <person name="Beck A."/>
            <person name="Lehrach H."/>
            <person name="Reinhardt R."/>
            <person name="Pohl T.M."/>
            <person name="Eger P."/>
            <person name="Zimmermann W."/>
            <person name="Wedler H."/>
            <person name="Wambutt R."/>
            <person name="Purnelle B."/>
            <person name="Goffeau A."/>
            <person name="Cadieu E."/>
            <person name="Dreano S."/>
            <person name="Gloux S."/>
            <person name="Lelaure V."/>
            <person name="Mottier S."/>
            <person name="Galibert F."/>
            <person name="Aves S.J."/>
            <person name="Xiang Z."/>
            <person name="Hunt C."/>
            <person name="Moore K."/>
            <person name="Hurst S.M."/>
            <person name="Lucas M."/>
            <person name="Rochet M."/>
            <person name="Gaillardin C."/>
            <person name="Tallada V.A."/>
            <person name="Garzon A."/>
            <person name="Thode G."/>
            <person name="Daga R.R."/>
            <person name="Cruzado L."/>
            <person name="Jimenez J."/>
            <person name="Sanchez M."/>
            <person name="del Rey F."/>
            <person name="Benito J."/>
            <person name="Dominguez A."/>
            <person name="Revuelta J.L."/>
            <person name="Moreno S."/>
            <person name="Armstrong J."/>
            <person name="Forsburg S.L."/>
            <person name="Cerutti L."/>
            <person name="Lowe T."/>
            <person name="McCombie W.R."/>
            <person name="Paulsen I."/>
            <person name="Potashkin J."/>
            <person name="Shpakovski G.V."/>
            <person name="Ussery D."/>
            <person name="Barrell B.G."/>
            <person name="Nurse P."/>
        </authorList>
    </citation>
    <scope>NUCLEOTIDE SEQUENCE [LARGE SCALE GENOMIC DNA]</scope>
    <source>
        <strain>972 / ATCC 24843</strain>
    </source>
</reference>
<proteinExistence type="predicted"/>